<comment type="function">
    <text>Can catalyze the hydrolysis of ATP in the presence of single-stranded DNA, the ATP-dependent uptake of single-stranded DNA by duplex DNA, and the ATP-dependent hybridization of homologous single-stranded DNAs. It interacts with LexA causing its activation and leading to its autocatalytic cleavage.</text>
</comment>
<comment type="subcellular location">
    <subcellularLocation>
        <location evidence="1">Cytoplasm</location>
    </subcellularLocation>
</comment>
<comment type="similarity">
    <text evidence="1">Belongs to the RecA family.</text>
</comment>
<comment type="sequence caution" evidence="2">
    <conflict type="erroneous initiation">
        <sequence resource="EMBL-CDS" id="AAW76195"/>
    </conflict>
</comment>
<reference key="1">
    <citation type="journal article" date="1998" name="FEMS Microbiol. Lett.">
        <title>Characterization and expression analysis of a Xanthomonas oryzae pv. oryzae recA.</title>
        <authorList>
            <person name="Rabibhadana S."/>
            <person name="Chamnongpol S."/>
            <person name="Sukchawalit R."/>
            <person name="Ambulos N.P. Jr."/>
            <person name="Trempy J.E."/>
            <person name="Mongkolsuk S."/>
        </authorList>
    </citation>
    <scope>NUCLEOTIDE SEQUENCE [GENOMIC DNA]</scope>
</reference>
<reference key="2">
    <citation type="journal article" date="2002" name="FEMS Microbiol. Lett.">
        <title>Genetic organization of the lexA, recA and recX genes in Xanthomonas campestris.</title>
        <authorList>
            <person name="Yang Y.-C."/>
            <person name="Hsu C.-H."/>
            <person name="Chou C.-P."/>
            <person name="Yang M.-K."/>
        </authorList>
    </citation>
    <scope>NUCLEOTIDE SEQUENCE [GENOMIC DNA]</scope>
    <source>
        <strain>XO604</strain>
    </source>
</reference>
<reference key="3">
    <citation type="journal article" date="2005" name="Nucleic Acids Res.">
        <title>The genome sequence of Xanthomonas oryzae pathovar oryzae KACC10331, the bacterial blight pathogen of rice.</title>
        <authorList>
            <person name="Lee B.-M."/>
            <person name="Park Y.-J."/>
            <person name="Park D.-S."/>
            <person name="Kang H.-W."/>
            <person name="Kim J.-G."/>
            <person name="Song E.-S."/>
            <person name="Park I.-C."/>
            <person name="Yoon U.-H."/>
            <person name="Hahn J.-H."/>
            <person name="Koo B.-S."/>
            <person name="Lee G.-B."/>
            <person name="Kim H."/>
            <person name="Park H.-S."/>
            <person name="Yoon K.-O."/>
            <person name="Kim J.-H."/>
            <person name="Jung C.-H."/>
            <person name="Koh N.-H."/>
            <person name="Seo J.-S."/>
            <person name="Go S.-J."/>
        </authorList>
    </citation>
    <scope>NUCLEOTIDE SEQUENCE [LARGE SCALE GENOMIC DNA]</scope>
    <source>
        <strain>KACC10331 / KXO85</strain>
    </source>
</reference>
<proteinExistence type="inferred from homology"/>
<dbReference type="EMBL" id="AF013600">
    <property type="protein sequence ID" value="AAC38154.1"/>
    <property type="molecule type" value="Genomic_DNA"/>
</dbReference>
<dbReference type="EMBL" id="AF399932">
    <property type="protein sequence ID" value="AAK85395.1"/>
    <property type="molecule type" value="Genomic_DNA"/>
</dbReference>
<dbReference type="EMBL" id="AE013598">
    <property type="protein sequence ID" value="AAW76195.1"/>
    <property type="status" value="ALT_INIT"/>
    <property type="molecule type" value="Genomic_DNA"/>
</dbReference>
<dbReference type="SMR" id="O30633"/>
<dbReference type="STRING" id="291331.XOO2941"/>
<dbReference type="KEGG" id="xoo:XOO2941"/>
<dbReference type="HOGENOM" id="CLU_040469_3_2_6"/>
<dbReference type="Proteomes" id="UP000006735">
    <property type="component" value="Chromosome"/>
</dbReference>
<dbReference type="GO" id="GO:0005829">
    <property type="term" value="C:cytosol"/>
    <property type="evidence" value="ECO:0007669"/>
    <property type="project" value="TreeGrafter"/>
</dbReference>
<dbReference type="GO" id="GO:0005524">
    <property type="term" value="F:ATP binding"/>
    <property type="evidence" value="ECO:0007669"/>
    <property type="project" value="UniProtKB-UniRule"/>
</dbReference>
<dbReference type="GO" id="GO:0016887">
    <property type="term" value="F:ATP hydrolysis activity"/>
    <property type="evidence" value="ECO:0007669"/>
    <property type="project" value="InterPro"/>
</dbReference>
<dbReference type="GO" id="GO:0140664">
    <property type="term" value="F:ATP-dependent DNA damage sensor activity"/>
    <property type="evidence" value="ECO:0007669"/>
    <property type="project" value="InterPro"/>
</dbReference>
<dbReference type="GO" id="GO:0003684">
    <property type="term" value="F:damaged DNA binding"/>
    <property type="evidence" value="ECO:0007669"/>
    <property type="project" value="UniProtKB-UniRule"/>
</dbReference>
<dbReference type="GO" id="GO:0003697">
    <property type="term" value="F:single-stranded DNA binding"/>
    <property type="evidence" value="ECO:0007669"/>
    <property type="project" value="UniProtKB-UniRule"/>
</dbReference>
<dbReference type="GO" id="GO:0006310">
    <property type="term" value="P:DNA recombination"/>
    <property type="evidence" value="ECO:0007669"/>
    <property type="project" value="UniProtKB-UniRule"/>
</dbReference>
<dbReference type="GO" id="GO:0006281">
    <property type="term" value="P:DNA repair"/>
    <property type="evidence" value="ECO:0007669"/>
    <property type="project" value="UniProtKB-UniRule"/>
</dbReference>
<dbReference type="GO" id="GO:0009432">
    <property type="term" value="P:SOS response"/>
    <property type="evidence" value="ECO:0007669"/>
    <property type="project" value="UniProtKB-UniRule"/>
</dbReference>
<dbReference type="CDD" id="cd00983">
    <property type="entry name" value="RecA"/>
    <property type="match status" value="1"/>
</dbReference>
<dbReference type="FunFam" id="3.40.50.300:FF:000087">
    <property type="entry name" value="Recombinase RecA"/>
    <property type="match status" value="1"/>
</dbReference>
<dbReference type="Gene3D" id="3.40.50.300">
    <property type="entry name" value="P-loop containing nucleotide triphosphate hydrolases"/>
    <property type="match status" value="1"/>
</dbReference>
<dbReference type="HAMAP" id="MF_00268">
    <property type="entry name" value="RecA"/>
    <property type="match status" value="1"/>
</dbReference>
<dbReference type="InterPro" id="IPR003593">
    <property type="entry name" value="AAA+_ATPase"/>
</dbReference>
<dbReference type="InterPro" id="IPR013765">
    <property type="entry name" value="DNA_recomb/repair_RecA"/>
</dbReference>
<dbReference type="InterPro" id="IPR020584">
    <property type="entry name" value="DNA_recomb/repair_RecA_CS"/>
</dbReference>
<dbReference type="InterPro" id="IPR027417">
    <property type="entry name" value="P-loop_NTPase"/>
</dbReference>
<dbReference type="InterPro" id="IPR049261">
    <property type="entry name" value="RecA-like_C"/>
</dbReference>
<dbReference type="InterPro" id="IPR049428">
    <property type="entry name" value="RecA-like_N"/>
</dbReference>
<dbReference type="InterPro" id="IPR020588">
    <property type="entry name" value="RecA_ATP-bd"/>
</dbReference>
<dbReference type="InterPro" id="IPR023400">
    <property type="entry name" value="RecA_C_sf"/>
</dbReference>
<dbReference type="InterPro" id="IPR020587">
    <property type="entry name" value="RecA_monomer-monomer_interface"/>
</dbReference>
<dbReference type="NCBIfam" id="TIGR02012">
    <property type="entry name" value="tigrfam_recA"/>
    <property type="match status" value="1"/>
</dbReference>
<dbReference type="PANTHER" id="PTHR45900:SF1">
    <property type="entry name" value="MITOCHONDRIAL DNA REPAIR PROTEIN RECA HOMOLOG-RELATED"/>
    <property type="match status" value="1"/>
</dbReference>
<dbReference type="PANTHER" id="PTHR45900">
    <property type="entry name" value="RECA"/>
    <property type="match status" value="1"/>
</dbReference>
<dbReference type="Pfam" id="PF00154">
    <property type="entry name" value="RecA"/>
    <property type="match status" value="1"/>
</dbReference>
<dbReference type="Pfam" id="PF21096">
    <property type="entry name" value="RecA_C"/>
    <property type="match status" value="1"/>
</dbReference>
<dbReference type="PRINTS" id="PR00142">
    <property type="entry name" value="RECA"/>
</dbReference>
<dbReference type="SMART" id="SM00382">
    <property type="entry name" value="AAA"/>
    <property type="match status" value="1"/>
</dbReference>
<dbReference type="SUPFAM" id="SSF52540">
    <property type="entry name" value="P-loop containing nucleoside triphosphate hydrolases"/>
    <property type="match status" value="1"/>
</dbReference>
<dbReference type="SUPFAM" id="SSF54752">
    <property type="entry name" value="RecA protein, C-terminal domain"/>
    <property type="match status" value="1"/>
</dbReference>
<dbReference type="PROSITE" id="PS00321">
    <property type="entry name" value="RECA_1"/>
    <property type="match status" value="1"/>
</dbReference>
<dbReference type="PROSITE" id="PS50162">
    <property type="entry name" value="RECA_2"/>
    <property type="match status" value="1"/>
</dbReference>
<dbReference type="PROSITE" id="PS50163">
    <property type="entry name" value="RECA_3"/>
    <property type="match status" value="1"/>
</dbReference>
<sequence>MDENKKRALAAALSQIEKQFGKGSVMRMGDRVIEAVEVIPTGSLMLDIALGTGGLPKGRVVEIYGPESSGKTTLTLQAIAQCQKLGGTAAFIDAEHALDPVYAAKLGVNVDDLLLSQPDTGEQALEIADMLVRSSSVDIVVIDSVAALTPKAEIEGEMGDQLPGLQARLMSQALRKLTGNIKRSNTLVVFINQLRMKIGVMMPGQSPEVTTGGNALKFYASVRLDIRRIGAIKKGDEIIGNQTKIKVVKNKLAPPFKQVVTEILYGEGISREGELIDMGVEAKLVEKAGAWYSYGDERIGQGKDNARTYLRDNPQVAVRLEAELREKFQPAEAPREAGDDEEKE</sequence>
<accession>O30633</accession>
<accession>Q5GYM6</accession>
<accession>Q93MR1</accession>
<keyword id="KW-0067">ATP-binding</keyword>
<keyword id="KW-0963">Cytoplasm</keyword>
<keyword id="KW-0227">DNA damage</keyword>
<keyword id="KW-0233">DNA recombination</keyword>
<keyword id="KW-0234">DNA repair</keyword>
<keyword id="KW-0238">DNA-binding</keyword>
<keyword id="KW-0547">Nucleotide-binding</keyword>
<keyword id="KW-1185">Reference proteome</keyword>
<keyword id="KW-0742">SOS response</keyword>
<name>RECA_XANOR</name>
<gene>
    <name evidence="1" type="primary">recA</name>
    <name type="ordered locus">XOO2941</name>
</gene>
<feature type="chain" id="PRO_0000122905" description="Protein RecA">
    <location>
        <begin position="1"/>
        <end position="344"/>
    </location>
</feature>
<feature type="binding site" evidence="1">
    <location>
        <begin position="65"/>
        <end position="72"/>
    </location>
    <ligand>
        <name>ATP</name>
        <dbReference type="ChEBI" id="CHEBI:30616"/>
    </ligand>
</feature>
<feature type="sequence conflict" description="In Ref. 1; AAC38154." evidence="2" ref="1">
    <original>G</original>
    <variation>A</variation>
    <location>
        <position position="279"/>
    </location>
</feature>
<evidence type="ECO:0000255" key="1">
    <source>
        <dbReference type="HAMAP-Rule" id="MF_00268"/>
    </source>
</evidence>
<evidence type="ECO:0000305" key="2"/>
<protein>
    <recommendedName>
        <fullName evidence="1">Protein RecA</fullName>
    </recommendedName>
    <alternativeName>
        <fullName evidence="1">Recombinase A</fullName>
    </alternativeName>
</protein>
<organism>
    <name type="scientific">Xanthomonas oryzae pv. oryzae (strain KACC10331 / KXO85)</name>
    <dbReference type="NCBI Taxonomy" id="291331"/>
    <lineage>
        <taxon>Bacteria</taxon>
        <taxon>Pseudomonadati</taxon>
        <taxon>Pseudomonadota</taxon>
        <taxon>Gammaproteobacteria</taxon>
        <taxon>Lysobacterales</taxon>
        <taxon>Lysobacteraceae</taxon>
        <taxon>Xanthomonas</taxon>
    </lineage>
</organism>